<keyword id="KW-0066">ATP synthesis</keyword>
<keyword id="KW-0997">Cell inner membrane</keyword>
<keyword id="KW-1003">Cell membrane</keyword>
<keyword id="KW-0138">CF(0)</keyword>
<keyword id="KW-0375">Hydrogen ion transport</keyword>
<keyword id="KW-0406">Ion transport</keyword>
<keyword id="KW-0472">Membrane</keyword>
<keyword id="KW-0812">Transmembrane</keyword>
<keyword id="KW-1133">Transmembrane helix</keyword>
<keyword id="KW-0813">Transport</keyword>
<feature type="chain" id="PRO_1000215143" description="ATP synthase subunit a">
    <location>
        <begin position="1"/>
        <end position="238"/>
    </location>
</feature>
<feature type="transmembrane region" description="Helical" evidence="1">
    <location>
        <begin position="35"/>
        <end position="55"/>
    </location>
</feature>
<feature type="transmembrane region" description="Helical" evidence="1">
    <location>
        <begin position="61"/>
        <end position="81"/>
    </location>
</feature>
<feature type="transmembrane region" description="Helical" evidence="1">
    <location>
        <begin position="94"/>
        <end position="114"/>
    </location>
</feature>
<feature type="transmembrane region" description="Helical" evidence="1">
    <location>
        <begin position="128"/>
        <end position="148"/>
    </location>
</feature>
<feature type="transmembrane region" description="Helical" evidence="1">
    <location>
        <begin position="151"/>
        <end position="171"/>
    </location>
</feature>
<feature type="transmembrane region" description="Helical" evidence="1">
    <location>
        <begin position="190"/>
        <end position="210"/>
    </location>
</feature>
<feature type="transmembrane region" description="Helical" evidence="1">
    <location>
        <begin position="211"/>
        <end position="231"/>
    </location>
</feature>
<organism>
    <name type="scientific">Solidesulfovibrio magneticus (strain ATCC 700980 / DSM 13731 / RS-1)</name>
    <name type="common">Desulfovibrio magneticus</name>
    <dbReference type="NCBI Taxonomy" id="573370"/>
    <lineage>
        <taxon>Bacteria</taxon>
        <taxon>Pseudomonadati</taxon>
        <taxon>Thermodesulfobacteriota</taxon>
        <taxon>Desulfovibrionia</taxon>
        <taxon>Desulfovibrionales</taxon>
        <taxon>Desulfovibrionaceae</taxon>
        <taxon>Solidesulfovibrio</taxon>
    </lineage>
</organism>
<name>ATP6_SOLM1</name>
<evidence type="ECO:0000255" key="1">
    <source>
        <dbReference type="HAMAP-Rule" id="MF_01393"/>
    </source>
</evidence>
<proteinExistence type="inferred from homology"/>
<sequence length="238" mass="26406">MAGGLPHPVLLVDEAAKSVGLYKLNDVFHAQVIDSNVIYAWFAMVLLIILGTLATRKLAMVPSGLQNFFEVVVGGLESFVVENIGEKGRKVYPFLCALFLFIITGNLIGLVPGLDSPTNNVNTNAAMALTVFAYYNFWGIRMWGAGYIKHFMGPFWWLVPLMLPIEIISHLARPLSLTLRLFGNIRGEEIVLVLLFALAPVVGTFPMYFLFSLADCIQAFVFFMLAMIYLKGSLDHAH</sequence>
<accession>C4XQ07</accession>
<gene>
    <name evidence="1" type="primary">atpB</name>
    <name type="ordered locus">DMR_42160</name>
</gene>
<dbReference type="EMBL" id="AP010904">
    <property type="protein sequence ID" value="BAH77707.1"/>
    <property type="molecule type" value="Genomic_DNA"/>
</dbReference>
<dbReference type="RefSeq" id="WP_015862832.1">
    <property type="nucleotide sequence ID" value="NC_012796.1"/>
</dbReference>
<dbReference type="SMR" id="C4XQ07"/>
<dbReference type="STRING" id="573370.DMR_42160"/>
<dbReference type="KEGG" id="dma:DMR_42160"/>
<dbReference type="eggNOG" id="COG0356">
    <property type="taxonomic scope" value="Bacteria"/>
</dbReference>
<dbReference type="HOGENOM" id="CLU_041018_2_2_7"/>
<dbReference type="OrthoDB" id="9789241at2"/>
<dbReference type="Proteomes" id="UP000009071">
    <property type="component" value="Chromosome"/>
</dbReference>
<dbReference type="GO" id="GO:0005886">
    <property type="term" value="C:plasma membrane"/>
    <property type="evidence" value="ECO:0007669"/>
    <property type="project" value="UniProtKB-SubCell"/>
</dbReference>
<dbReference type="GO" id="GO:0045259">
    <property type="term" value="C:proton-transporting ATP synthase complex"/>
    <property type="evidence" value="ECO:0007669"/>
    <property type="project" value="UniProtKB-KW"/>
</dbReference>
<dbReference type="GO" id="GO:0046933">
    <property type="term" value="F:proton-transporting ATP synthase activity, rotational mechanism"/>
    <property type="evidence" value="ECO:0007669"/>
    <property type="project" value="UniProtKB-UniRule"/>
</dbReference>
<dbReference type="GO" id="GO:0042777">
    <property type="term" value="P:proton motive force-driven plasma membrane ATP synthesis"/>
    <property type="evidence" value="ECO:0007669"/>
    <property type="project" value="TreeGrafter"/>
</dbReference>
<dbReference type="CDD" id="cd00310">
    <property type="entry name" value="ATP-synt_Fo_a_6"/>
    <property type="match status" value="1"/>
</dbReference>
<dbReference type="Gene3D" id="1.20.120.220">
    <property type="entry name" value="ATP synthase, F0 complex, subunit A"/>
    <property type="match status" value="1"/>
</dbReference>
<dbReference type="HAMAP" id="MF_01393">
    <property type="entry name" value="ATP_synth_a_bact"/>
    <property type="match status" value="1"/>
</dbReference>
<dbReference type="InterPro" id="IPR045082">
    <property type="entry name" value="ATP_syn_F0_a_bact/chloroplast"/>
</dbReference>
<dbReference type="InterPro" id="IPR000568">
    <property type="entry name" value="ATP_synth_F0_asu"/>
</dbReference>
<dbReference type="InterPro" id="IPR023011">
    <property type="entry name" value="ATP_synth_F0_asu_AS"/>
</dbReference>
<dbReference type="InterPro" id="IPR035908">
    <property type="entry name" value="F0_ATP_A_sf"/>
</dbReference>
<dbReference type="NCBIfam" id="TIGR01131">
    <property type="entry name" value="ATP_synt_6_or_A"/>
    <property type="match status" value="1"/>
</dbReference>
<dbReference type="PANTHER" id="PTHR42823">
    <property type="entry name" value="ATP SYNTHASE SUBUNIT A, CHLOROPLASTIC"/>
    <property type="match status" value="1"/>
</dbReference>
<dbReference type="PANTHER" id="PTHR42823:SF3">
    <property type="entry name" value="ATP SYNTHASE SUBUNIT A, CHLOROPLASTIC"/>
    <property type="match status" value="1"/>
</dbReference>
<dbReference type="Pfam" id="PF00119">
    <property type="entry name" value="ATP-synt_A"/>
    <property type="match status" value="1"/>
</dbReference>
<dbReference type="PRINTS" id="PR00123">
    <property type="entry name" value="ATPASEA"/>
</dbReference>
<dbReference type="SUPFAM" id="SSF81336">
    <property type="entry name" value="F1F0 ATP synthase subunit A"/>
    <property type="match status" value="1"/>
</dbReference>
<dbReference type="PROSITE" id="PS00449">
    <property type="entry name" value="ATPASE_A"/>
    <property type="match status" value="1"/>
</dbReference>
<comment type="function">
    <text evidence="1">Key component of the proton channel; it plays a direct role in the translocation of protons across the membrane.</text>
</comment>
<comment type="subunit">
    <text evidence="1">F-type ATPases have 2 components, CF(1) - the catalytic core - and CF(0) - the membrane proton channel. CF(1) has five subunits: alpha(3), beta(3), gamma(1), delta(1), epsilon(1). CF(0) has three main subunits: a(1), b(2) and c(9-12). The alpha and beta chains form an alternating ring which encloses part of the gamma chain. CF(1) is attached to CF(0) by a central stalk formed by the gamma and epsilon chains, while a peripheral stalk is formed by the delta and b chains.</text>
</comment>
<comment type="subcellular location">
    <subcellularLocation>
        <location evidence="1">Cell inner membrane</location>
        <topology evidence="1">Multi-pass membrane protein</topology>
    </subcellularLocation>
</comment>
<comment type="similarity">
    <text evidence="1">Belongs to the ATPase A chain family.</text>
</comment>
<protein>
    <recommendedName>
        <fullName evidence="1">ATP synthase subunit a</fullName>
    </recommendedName>
    <alternativeName>
        <fullName evidence="1">ATP synthase F0 sector subunit a</fullName>
    </alternativeName>
    <alternativeName>
        <fullName evidence="1">F-ATPase subunit 6</fullName>
    </alternativeName>
</protein>
<reference key="1">
    <citation type="journal article" date="2009" name="Genome Res.">
        <title>Whole genome sequence of Desulfovibrio magneticus strain RS-1 revealed common gene clusters in magnetotactic bacteria.</title>
        <authorList>
            <person name="Nakazawa H."/>
            <person name="Arakaki A."/>
            <person name="Narita-Yamada S."/>
            <person name="Yashiro I."/>
            <person name="Jinno K."/>
            <person name="Aoki N."/>
            <person name="Tsuruyama A."/>
            <person name="Okamura Y."/>
            <person name="Tanikawa S."/>
            <person name="Fujita N."/>
            <person name="Takeyama H."/>
            <person name="Matsunaga T."/>
        </authorList>
    </citation>
    <scope>NUCLEOTIDE SEQUENCE [LARGE SCALE GENOMIC DNA]</scope>
    <source>
        <strain>ATCC 700980 / DSM 13731 / RS-1</strain>
    </source>
</reference>